<feature type="chain" id="PRO_1000127438" description="N-methyl-L-tryptophan oxidase">
    <location>
        <begin position="1"/>
        <end position="372"/>
    </location>
</feature>
<feature type="binding site" evidence="1">
    <location>
        <begin position="4"/>
        <end position="34"/>
    </location>
    <ligand>
        <name>FAD</name>
        <dbReference type="ChEBI" id="CHEBI:57692"/>
    </ligand>
</feature>
<feature type="modified residue" description="S-8alpha-FAD cysteine" evidence="1">
    <location>
        <position position="308"/>
    </location>
</feature>
<reference key="1">
    <citation type="journal article" date="2008" name="J. Bacteriol.">
        <title>The complete genome sequence of Escherichia coli DH10B: insights into the biology of a laboratory workhorse.</title>
        <authorList>
            <person name="Durfee T."/>
            <person name="Nelson R."/>
            <person name="Baldwin S."/>
            <person name="Plunkett G. III"/>
            <person name="Burland V."/>
            <person name="Mau B."/>
            <person name="Petrosino J.F."/>
            <person name="Qin X."/>
            <person name="Muzny D.M."/>
            <person name="Ayele M."/>
            <person name="Gibbs R.A."/>
            <person name="Csorgo B."/>
            <person name="Posfai G."/>
            <person name="Weinstock G.M."/>
            <person name="Blattner F.R."/>
        </authorList>
    </citation>
    <scope>NUCLEOTIDE SEQUENCE [LARGE SCALE GENOMIC DNA]</scope>
    <source>
        <strain>K12 / DH10B</strain>
    </source>
</reference>
<name>MTOX_ECODH</name>
<gene>
    <name evidence="1" type="primary">solA</name>
    <name type="ordered locus">ECDH10B_1130</name>
</gene>
<accession>B1X9H2</accession>
<evidence type="ECO:0000255" key="1">
    <source>
        <dbReference type="HAMAP-Rule" id="MF_00515"/>
    </source>
</evidence>
<proteinExistence type="inferred from homology"/>
<organism>
    <name type="scientific">Escherichia coli (strain K12 / DH10B)</name>
    <dbReference type="NCBI Taxonomy" id="316385"/>
    <lineage>
        <taxon>Bacteria</taxon>
        <taxon>Pseudomonadati</taxon>
        <taxon>Pseudomonadota</taxon>
        <taxon>Gammaproteobacteria</taxon>
        <taxon>Enterobacterales</taxon>
        <taxon>Enterobacteriaceae</taxon>
        <taxon>Escherichia</taxon>
    </lineage>
</organism>
<protein>
    <recommendedName>
        <fullName evidence="1">N-methyl-L-tryptophan oxidase</fullName>
        <shortName evidence="1">MTOX</shortName>
        <ecNumber evidence="1">1.5.3.-</ecNumber>
    </recommendedName>
</protein>
<comment type="function">
    <text evidence="1">Catalyzes the oxidative demethylation of N-methyl-L-tryptophan.</text>
</comment>
<comment type="catalytic activity">
    <reaction evidence="1">
        <text>N(alpha)-methyl-L-tryptophan + O2 + H2O = L-tryptophan + formaldehyde + H2O2</text>
        <dbReference type="Rhea" id="RHEA:28006"/>
        <dbReference type="ChEBI" id="CHEBI:15377"/>
        <dbReference type="ChEBI" id="CHEBI:15379"/>
        <dbReference type="ChEBI" id="CHEBI:16240"/>
        <dbReference type="ChEBI" id="CHEBI:16842"/>
        <dbReference type="ChEBI" id="CHEBI:57283"/>
        <dbReference type="ChEBI" id="CHEBI:57912"/>
    </reaction>
</comment>
<comment type="cofactor">
    <cofactor evidence="1">
        <name>FAD</name>
        <dbReference type="ChEBI" id="CHEBI:57692"/>
    </cofactor>
    <text evidence="1">Binds 1 FAD per subunit.</text>
</comment>
<comment type="subunit">
    <text evidence="1">Monomer.</text>
</comment>
<comment type="similarity">
    <text evidence="1">Belongs to the MSOX/MTOX family. MTOX subfamily.</text>
</comment>
<sequence>MKYDLIIIGSGSVGAAAGYYATRAGLNVLMTDAHMPPHQHGSHHGDTRLIRHAYGEGEKYVPLVLRAQTLWDELSRHNEEDPIFVRSGVINLGPADSTFLANVAHSAEQWQLNVEKLDAQGIMARWPEIRVPDNYIGLFETDSGFLRSELAIKTWIQLAKEAGCAQLFNCPVTAIRHDDDGVTIETADGEYQAKKAIVCAGTWVKDLLPELPVQPVRKVFAWYQADGRYSVKNKFPAFTGELPNGDQYYGFPAENDALKIGKHNGGQVIHSADERVPFAEVASDGSEAFPFLRNVLPGIGCCLYGAACTYDNSPDEDFIIDTLPGHDNTLLITGLSGHGFKFASVLGEIAADFAQDKKSDFDLTPFRLSRFQ</sequence>
<keyword id="KW-0274">FAD</keyword>
<keyword id="KW-0285">Flavoprotein</keyword>
<keyword id="KW-0560">Oxidoreductase</keyword>
<dbReference type="EC" id="1.5.3.-" evidence="1"/>
<dbReference type="EMBL" id="CP000948">
    <property type="protein sequence ID" value="ACB02252.1"/>
    <property type="molecule type" value="Genomic_DNA"/>
</dbReference>
<dbReference type="RefSeq" id="WP_000872833.1">
    <property type="nucleotide sequence ID" value="NC_010473.1"/>
</dbReference>
<dbReference type="SMR" id="B1X9H2"/>
<dbReference type="GeneID" id="75203646"/>
<dbReference type="KEGG" id="ecd:ECDH10B_1130"/>
<dbReference type="HOGENOM" id="CLU_007884_2_1_6"/>
<dbReference type="GO" id="GO:0005829">
    <property type="term" value="C:cytosol"/>
    <property type="evidence" value="ECO:0007669"/>
    <property type="project" value="TreeGrafter"/>
</dbReference>
<dbReference type="GO" id="GO:0050660">
    <property type="term" value="F:flavin adenine dinucleotide binding"/>
    <property type="evidence" value="ECO:0007669"/>
    <property type="project" value="InterPro"/>
</dbReference>
<dbReference type="GO" id="GO:0050131">
    <property type="term" value="F:N-methyl-L-amino-acid oxidase activity"/>
    <property type="evidence" value="ECO:0007669"/>
    <property type="project" value="InterPro"/>
</dbReference>
<dbReference type="GO" id="GO:0008115">
    <property type="term" value="F:sarcosine oxidase activity"/>
    <property type="evidence" value="ECO:0007669"/>
    <property type="project" value="TreeGrafter"/>
</dbReference>
<dbReference type="Gene3D" id="3.30.9.10">
    <property type="entry name" value="D-Amino Acid Oxidase, subunit A, domain 2"/>
    <property type="match status" value="1"/>
</dbReference>
<dbReference type="Gene3D" id="3.50.50.60">
    <property type="entry name" value="FAD/NAD(P)-binding domain"/>
    <property type="match status" value="1"/>
</dbReference>
<dbReference type="HAMAP" id="MF_00515">
    <property type="entry name" value="MTOX"/>
    <property type="match status" value="1"/>
</dbReference>
<dbReference type="InterPro" id="IPR006076">
    <property type="entry name" value="FAD-dep_OxRdtase"/>
</dbReference>
<dbReference type="InterPro" id="IPR036188">
    <property type="entry name" value="FAD/NAD-bd_sf"/>
</dbReference>
<dbReference type="InterPro" id="IPR023493">
    <property type="entry name" value="Me_Trp_Oxase_MTOX"/>
</dbReference>
<dbReference type="InterPro" id="IPR045170">
    <property type="entry name" value="MTOX"/>
</dbReference>
<dbReference type="NCBIfam" id="NF008425">
    <property type="entry name" value="PRK11259.1"/>
    <property type="match status" value="1"/>
</dbReference>
<dbReference type="PANTHER" id="PTHR10961:SF7">
    <property type="entry name" value="FAD DEPENDENT OXIDOREDUCTASE DOMAIN-CONTAINING PROTEIN"/>
    <property type="match status" value="1"/>
</dbReference>
<dbReference type="PANTHER" id="PTHR10961">
    <property type="entry name" value="PEROXISOMAL SARCOSINE OXIDASE"/>
    <property type="match status" value="1"/>
</dbReference>
<dbReference type="Pfam" id="PF01266">
    <property type="entry name" value="DAO"/>
    <property type="match status" value="1"/>
</dbReference>
<dbReference type="SUPFAM" id="SSF54373">
    <property type="entry name" value="FAD-linked reductases, C-terminal domain"/>
    <property type="match status" value="1"/>
</dbReference>
<dbReference type="SUPFAM" id="SSF51905">
    <property type="entry name" value="FAD/NAD(P)-binding domain"/>
    <property type="match status" value="1"/>
</dbReference>